<proteinExistence type="inferred from homology"/>
<dbReference type="EC" id="3.5.1.88" evidence="1"/>
<dbReference type="EMBL" id="AM260525">
    <property type="protein sequence ID" value="CAK00575.1"/>
    <property type="molecule type" value="Genomic_DNA"/>
</dbReference>
<dbReference type="RefSeq" id="WP_012230394.1">
    <property type="nucleotide sequence ID" value="NC_010161.1"/>
</dbReference>
<dbReference type="SMR" id="A9ILK4"/>
<dbReference type="KEGG" id="btr:BT_0079"/>
<dbReference type="eggNOG" id="COG0242">
    <property type="taxonomic scope" value="Bacteria"/>
</dbReference>
<dbReference type="HOGENOM" id="CLU_061901_2_0_5"/>
<dbReference type="Proteomes" id="UP000001592">
    <property type="component" value="Chromosome"/>
</dbReference>
<dbReference type="GO" id="GO:0046872">
    <property type="term" value="F:metal ion binding"/>
    <property type="evidence" value="ECO:0007669"/>
    <property type="project" value="UniProtKB-KW"/>
</dbReference>
<dbReference type="GO" id="GO:0042586">
    <property type="term" value="F:peptide deformylase activity"/>
    <property type="evidence" value="ECO:0007669"/>
    <property type="project" value="UniProtKB-UniRule"/>
</dbReference>
<dbReference type="GO" id="GO:0043686">
    <property type="term" value="P:co-translational protein modification"/>
    <property type="evidence" value="ECO:0007669"/>
    <property type="project" value="TreeGrafter"/>
</dbReference>
<dbReference type="GO" id="GO:0006412">
    <property type="term" value="P:translation"/>
    <property type="evidence" value="ECO:0007669"/>
    <property type="project" value="UniProtKB-UniRule"/>
</dbReference>
<dbReference type="CDD" id="cd00487">
    <property type="entry name" value="Pep_deformylase"/>
    <property type="match status" value="1"/>
</dbReference>
<dbReference type="FunFam" id="3.90.45.10:FF:000005">
    <property type="entry name" value="Peptide deformylase"/>
    <property type="match status" value="1"/>
</dbReference>
<dbReference type="Gene3D" id="3.90.45.10">
    <property type="entry name" value="Peptide deformylase"/>
    <property type="match status" value="1"/>
</dbReference>
<dbReference type="HAMAP" id="MF_00163">
    <property type="entry name" value="Pep_deformylase"/>
    <property type="match status" value="1"/>
</dbReference>
<dbReference type="InterPro" id="IPR023635">
    <property type="entry name" value="Peptide_deformylase"/>
</dbReference>
<dbReference type="InterPro" id="IPR036821">
    <property type="entry name" value="Peptide_deformylase_sf"/>
</dbReference>
<dbReference type="NCBIfam" id="TIGR00079">
    <property type="entry name" value="pept_deformyl"/>
    <property type="match status" value="1"/>
</dbReference>
<dbReference type="NCBIfam" id="NF001159">
    <property type="entry name" value="PRK00150.1-3"/>
    <property type="match status" value="1"/>
</dbReference>
<dbReference type="PANTHER" id="PTHR10458">
    <property type="entry name" value="PEPTIDE DEFORMYLASE"/>
    <property type="match status" value="1"/>
</dbReference>
<dbReference type="PANTHER" id="PTHR10458:SF22">
    <property type="entry name" value="PEPTIDE DEFORMYLASE"/>
    <property type="match status" value="1"/>
</dbReference>
<dbReference type="Pfam" id="PF01327">
    <property type="entry name" value="Pep_deformylase"/>
    <property type="match status" value="1"/>
</dbReference>
<dbReference type="PIRSF" id="PIRSF004749">
    <property type="entry name" value="Pep_def"/>
    <property type="match status" value="1"/>
</dbReference>
<dbReference type="PRINTS" id="PR01576">
    <property type="entry name" value="PDEFORMYLASE"/>
</dbReference>
<dbReference type="SUPFAM" id="SSF56420">
    <property type="entry name" value="Peptide deformylase"/>
    <property type="match status" value="1"/>
</dbReference>
<comment type="function">
    <text evidence="1">Removes the formyl group from the N-terminal Met of newly synthesized proteins. Requires at least a dipeptide for an efficient rate of reaction. N-terminal L-methionine is a prerequisite for activity but the enzyme has broad specificity at other positions.</text>
</comment>
<comment type="catalytic activity">
    <reaction evidence="1">
        <text>N-terminal N-formyl-L-methionyl-[peptide] + H2O = N-terminal L-methionyl-[peptide] + formate</text>
        <dbReference type="Rhea" id="RHEA:24420"/>
        <dbReference type="Rhea" id="RHEA-COMP:10639"/>
        <dbReference type="Rhea" id="RHEA-COMP:10640"/>
        <dbReference type="ChEBI" id="CHEBI:15377"/>
        <dbReference type="ChEBI" id="CHEBI:15740"/>
        <dbReference type="ChEBI" id="CHEBI:49298"/>
        <dbReference type="ChEBI" id="CHEBI:64731"/>
        <dbReference type="EC" id="3.5.1.88"/>
    </reaction>
</comment>
<comment type="cofactor">
    <cofactor evidence="1">
        <name>Fe(2+)</name>
        <dbReference type="ChEBI" id="CHEBI:29033"/>
    </cofactor>
    <text evidence="1">Binds 1 Fe(2+) ion.</text>
</comment>
<comment type="similarity">
    <text evidence="1">Belongs to the polypeptide deformylase family.</text>
</comment>
<reference key="1">
    <citation type="journal article" date="2007" name="Nat. Genet.">
        <title>Genomic analysis of Bartonella identifies type IV secretion systems as host adaptability factors.</title>
        <authorList>
            <person name="Saenz H.L."/>
            <person name="Engel P."/>
            <person name="Stoeckli M.C."/>
            <person name="Lanz C."/>
            <person name="Raddatz G."/>
            <person name="Vayssier-Taussat M."/>
            <person name="Birtles R."/>
            <person name="Schuster S.C."/>
            <person name="Dehio C."/>
        </authorList>
    </citation>
    <scope>NUCLEOTIDE SEQUENCE [LARGE SCALE GENOMIC DNA]</scope>
    <source>
        <strain>CIP 105476 / IBS 506</strain>
    </source>
</reference>
<protein>
    <recommendedName>
        <fullName evidence="1">Peptide deformylase</fullName>
        <shortName evidence="1">PDF</shortName>
        <ecNumber evidence="1">3.5.1.88</ecNumber>
    </recommendedName>
    <alternativeName>
        <fullName evidence="1">Polypeptide deformylase</fullName>
    </alternativeName>
</protein>
<organism>
    <name type="scientific">Bartonella tribocorum (strain CIP 105476 / IBS 506)</name>
    <dbReference type="NCBI Taxonomy" id="382640"/>
    <lineage>
        <taxon>Bacteria</taxon>
        <taxon>Pseudomonadati</taxon>
        <taxon>Pseudomonadota</taxon>
        <taxon>Alphaproteobacteria</taxon>
        <taxon>Hyphomicrobiales</taxon>
        <taxon>Bartonellaceae</taxon>
        <taxon>Bartonella</taxon>
    </lineage>
</organism>
<evidence type="ECO:0000255" key="1">
    <source>
        <dbReference type="HAMAP-Rule" id="MF_00163"/>
    </source>
</evidence>
<keyword id="KW-0378">Hydrolase</keyword>
<keyword id="KW-0408">Iron</keyword>
<keyword id="KW-0479">Metal-binding</keyword>
<keyword id="KW-0648">Protein biosynthesis</keyword>
<gene>
    <name evidence="1" type="primary">def</name>
    <name type="ordered locus">BT_0079</name>
</gene>
<name>DEF_BART1</name>
<accession>A9ILK4</accession>
<feature type="chain" id="PRO_1000076939" description="Peptide deformylase">
    <location>
        <begin position="1"/>
        <end position="178"/>
    </location>
</feature>
<feature type="active site" evidence="1">
    <location>
        <position position="139"/>
    </location>
</feature>
<feature type="binding site" evidence="1">
    <location>
        <position position="96"/>
    </location>
    <ligand>
        <name>Fe cation</name>
        <dbReference type="ChEBI" id="CHEBI:24875"/>
    </ligand>
</feature>
<feature type="binding site" evidence="1">
    <location>
        <position position="138"/>
    </location>
    <ligand>
        <name>Fe cation</name>
        <dbReference type="ChEBI" id="CHEBI:24875"/>
    </ligand>
</feature>
<feature type="binding site" evidence="1">
    <location>
        <position position="142"/>
    </location>
    <ligand>
        <name>Fe cation</name>
        <dbReference type="ChEBI" id="CHEBI:24875"/>
    </ligand>
</feature>
<sequence length="178" mass="20568">MPMRSLVTLPDPILREVSKPVEQVDTALQELADDMLETMYHAKGIGLAAIQIGIPLRMLVIDVSGNAEDTQKKPLVIINPEILWLSDERNVYKEGCLSIPDYFAEVERPKRLRVRYQNREGKQKEIEADDLLATCLQHEIDHLDGRLFIDYISRIKRDMVIRKFKKRAKEKNTQEAVL</sequence>